<protein>
    <recommendedName>
        <fullName>Appendage-associated protein</fullName>
    </recommendedName>
</protein>
<evidence type="ECO:0000250" key="1">
    <source>
        <dbReference type="UniProtKB" id="Q5SF96"/>
    </source>
</evidence>
<evidence type="ECO:0000255" key="2"/>
<evidence type="ECO:0000269" key="3">
    <source>
    </source>
</evidence>
<evidence type="ECO:0000305" key="4"/>
<evidence type="ECO:0000312" key="5">
    <source>
        <dbReference type="EMBL" id="AAS83465.1"/>
    </source>
</evidence>
<accession>Q5SF95</accession>
<accession>B9KJ36</accession>
<proteinExistence type="inferred from homology"/>
<feature type="signal peptide" evidence="1">
    <location>
        <begin position="1"/>
        <end position="32"/>
    </location>
</feature>
<feature type="chain" id="PRO_0000258015" description="Appendage-associated protein" evidence="1">
    <location>
        <begin position="33"/>
        <end position="324"/>
    </location>
</feature>
<feature type="coiled-coil region" evidence="2">
    <location>
        <begin position="195"/>
        <end position="255"/>
    </location>
</feature>
<comment type="function">
    <text evidence="3">Associates with actin filament appendages that are formed in the inclusion appendages of the parasitophorous vacuole during infection of the host erythrocyte.</text>
</comment>
<comment type="subcellular location">
    <subcellularLocation>
        <location evidence="3">Secreted</location>
    </subcellularLocation>
</comment>
<organism>
    <name type="scientific">Anaplasma marginale (strain Florida)</name>
    <dbReference type="NCBI Taxonomy" id="320483"/>
    <lineage>
        <taxon>Bacteria</taxon>
        <taxon>Pseudomonadati</taxon>
        <taxon>Pseudomonadota</taxon>
        <taxon>Alphaproteobacteria</taxon>
        <taxon>Rickettsiales</taxon>
        <taxon>Anaplasmataceae</taxon>
        <taxon>Anaplasma</taxon>
    </lineage>
</organism>
<name>AAAP_ANAMF</name>
<reference evidence="4 5" key="1">
    <citation type="journal article" date="2004" name="Infect. Immun.">
        <title>Identification of a novel Anaplasma marginale appendage-associated protein that localizes with actin filaments during intraerythrocytic infection.</title>
        <authorList>
            <person name="Stich R.W."/>
            <person name="Olah G.A."/>
            <person name="Brayton K.A."/>
            <person name="Brown W.C."/>
            <person name="Fecheimer M."/>
            <person name="Green-Church K."/>
            <person name="Jittapalapong S."/>
            <person name="Kocan K.M."/>
            <person name="McGuire T.C."/>
            <person name="Rurangirwa F.R."/>
            <person name="Palmer G.H."/>
        </authorList>
    </citation>
    <scope>NUCLEOTIDE SEQUENCE [GENOMIC DNA]</scope>
    <scope>FUNCTION</scope>
    <scope>SUBCELLULAR LOCATION</scope>
</reference>
<reference key="2">
    <citation type="journal article" date="2009" name="BMC Genomics">
        <title>Conservation in the face of diversity: multistrain analysis of an intracellular bacterium.</title>
        <authorList>
            <person name="Dark M.J."/>
            <person name="Herndon D.R."/>
            <person name="Kappmeyer L.S."/>
            <person name="Gonzales M.P."/>
            <person name="Nordeen E."/>
            <person name="Palmer G.H."/>
            <person name="Knowles D.P. Jr."/>
            <person name="Brayton K.A."/>
        </authorList>
    </citation>
    <scope>NUCLEOTIDE SEQUENCE [LARGE SCALE GENOMIC DNA]</scope>
    <source>
        <strain>Florida</strain>
    </source>
</reference>
<gene>
    <name type="primary">aaaP1</name>
    <name type="ordered locus">AMF_659</name>
</gene>
<gene>
    <name type="primary">aaaP2</name>
    <name type="ordered locus">AMF_663</name>
</gene>
<keyword id="KW-0175">Coiled coil</keyword>
<keyword id="KW-1185">Reference proteome</keyword>
<keyword id="KW-0964">Secreted</keyword>
<keyword id="KW-0732">Signal</keyword>
<dbReference type="EMBL" id="AY514451">
    <property type="protein sequence ID" value="AAS83465.1"/>
    <property type="molecule type" value="Genomic_DNA"/>
</dbReference>
<dbReference type="EMBL" id="CP001079">
    <property type="protein sequence ID" value="ACM49498.1"/>
    <property type="molecule type" value="Genomic_DNA"/>
</dbReference>
<dbReference type="EMBL" id="CP001079">
    <property type="protein sequence ID" value="ACM49501.1"/>
    <property type="molecule type" value="Genomic_DNA"/>
</dbReference>
<dbReference type="SMR" id="Q5SF95"/>
<dbReference type="STRING" id="320483.AMF_659"/>
<dbReference type="KEGG" id="amf:AMF_659"/>
<dbReference type="KEGG" id="amf:AMF_663"/>
<dbReference type="PATRIC" id="fig|320483.3.peg.758"/>
<dbReference type="HOGENOM" id="CLU_856975_0_0_5"/>
<dbReference type="Proteomes" id="UP000007307">
    <property type="component" value="Chromosome"/>
</dbReference>
<dbReference type="GO" id="GO:0020003">
    <property type="term" value="C:symbiont-containing vacuole"/>
    <property type="evidence" value="ECO:0000314"/>
    <property type="project" value="UniProtKB"/>
</dbReference>
<dbReference type="GO" id="GO:0051015">
    <property type="term" value="F:actin filament binding"/>
    <property type="evidence" value="ECO:0000314"/>
    <property type="project" value="UniProtKB"/>
</dbReference>
<dbReference type="GO" id="GO:0051701">
    <property type="term" value="P:biological process involved in interaction with host"/>
    <property type="evidence" value="ECO:0000314"/>
    <property type="project" value="UniProtKB"/>
</dbReference>
<sequence>MGCPVSRGGSPGCGRRIAEELRLAEDARLRLALLGRCIVKGSPAQVRKELRAELKAIDAEWRPVIARESLRKELDAIDAEWQHAITFWHISRAIIGSIELSKELDAIDAEWRPVIVRESLRKELKAIDAEWRPAIRLESAYRAIIGSIELSKELKAIDAETQHAVELRRALRTIEGRIELSRELKAIDAEWAPRIAQAKEIAQARESLRKELNDIDAEWAPKIAQAKEIAQAKAELAAATDALKRAADKLQALGKMGTTSTPGTDLIGVVTTAVTTTLAGTQPAPGTDLVGVATPSTALGQPAPSTALTSVAAEVATPSTALGV</sequence>